<gene>
    <name type="primary">nac-1</name>
    <name type="synonym">indy-1</name>
    <name type="synonym">nad-1</name>
    <name type="ORF">F31F6.6</name>
</gene>
<sequence>MARKRGISSLLLIYKQSFVIWGALLIFSPLLMFVGDSHGLQAKCLYCVAVMGSYWVFEALPLAITAFIPMILFPLFGIMRSEEVARAYLPDTCFLFMGGLMVALAVEKCELHARVALFVLKTVGSEPARVMAGFMGVTGFLSMWISNTATTALMVPILQSVITELVSNHRMEDLVALCEAHHNSSRKHSVGMRRLSLPNENNEIKREEMDTAMSPREQKMAKGLMLSVCFSANIGGAATITGTASNLVLVGQLNELFPGADTGVNFLSWLIFAFPMVFCCLIYCWCVLYLLYLRDAPKGSIIVTRKLQQKYNELHAFSFAEMAVIFCFALLLVLWILREPQVVPGWGEMFKDEFVSDATSAMFIVILLFTLPEKLPSSRGSSEQRKASSGLLDWATVQDRFPWSVLFLLGGGFALAAGVKESGLSHDIGAIMRYLDVFNHNIIMLICIIISVTLTNVCSNTVIASIFIPIVAELARSLEIDPLNFMLPVTISASFAFLLPVATPPNAIVFSSGYLKVFDMFVSGLCVTLGCVVLSMLNMLLWAGFVFNLHLFPQWAANPSPPLDVQDWAVENNITFVGTSKL</sequence>
<name>NAD1_CAEEL</name>
<accession>Q93655</accession>
<accession>Q86R86</accession>
<dbReference type="EMBL" id="AY090484">
    <property type="protein sequence ID" value="AAM11893.1"/>
    <property type="molecule type" value="mRNA"/>
</dbReference>
<dbReference type="EMBL" id="Z69884">
    <property type="protein sequence ID" value="CAA93752.2"/>
    <property type="molecule type" value="Genomic_DNA"/>
</dbReference>
<dbReference type="PIR" id="T21613">
    <property type="entry name" value="T21613"/>
</dbReference>
<dbReference type="RefSeq" id="NP_510473.2">
    <property type="nucleotide sequence ID" value="NM_078072.6"/>
</dbReference>
<dbReference type="SMR" id="Q93655"/>
<dbReference type="FunCoup" id="Q93655">
    <property type="interactions" value="634"/>
</dbReference>
<dbReference type="STRING" id="6239.F31F6.6.1"/>
<dbReference type="TCDB" id="2.A.47.1.7">
    <property type="family name" value="the divalent anion:na(+) symporter (dass) family"/>
</dbReference>
<dbReference type="iPTMnet" id="Q93655"/>
<dbReference type="PaxDb" id="6239-F31F6.6"/>
<dbReference type="PeptideAtlas" id="Q93655"/>
<dbReference type="EnsemblMetazoa" id="F31F6.6.1">
    <property type="protein sequence ID" value="F31F6.6.1"/>
    <property type="gene ID" value="WBGene00003517"/>
</dbReference>
<dbReference type="GeneID" id="181585"/>
<dbReference type="KEGG" id="cel:CELE_F31F6.6"/>
<dbReference type="UCSC" id="F31F6.6">
    <property type="organism name" value="c. elegans"/>
</dbReference>
<dbReference type="AGR" id="WB:WBGene00003517"/>
<dbReference type="CTD" id="181585"/>
<dbReference type="WormBase" id="F31F6.6">
    <property type="protein sequence ID" value="CE34007"/>
    <property type="gene ID" value="WBGene00003517"/>
    <property type="gene designation" value="nac-1"/>
</dbReference>
<dbReference type="eggNOG" id="KOG1281">
    <property type="taxonomic scope" value="Eukaryota"/>
</dbReference>
<dbReference type="GeneTree" id="ENSGT01030000234550"/>
<dbReference type="HOGENOM" id="CLU_005170_9_1_1"/>
<dbReference type="InParanoid" id="Q93655"/>
<dbReference type="OMA" id="MLAINSW"/>
<dbReference type="OrthoDB" id="6493944at2759"/>
<dbReference type="PhylomeDB" id="Q93655"/>
<dbReference type="Reactome" id="R-CEL-433137">
    <property type="pathway name" value="Sodium-coupled sulphate, di- and tri-carboxylate transporters"/>
</dbReference>
<dbReference type="PRO" id="PR:Q93655"/>
<dbReference type="Proteomes" id="UP000001940">
    <property type="component" value="Chromosome X"/>
</dbReference>
<dbReference type="Bgee" id="WBGene00003517">
    <property type="expression patterns" value="Expressed in larva and 3 other cell types or tissues"/>
</dbReference>
<dbReference type="GO" id="GO:0005886">
    <property type="term" value="C:plasma membrane"/>
    <property type="evidence" value="ECO:0000318"/>
    <property type="project" value="GO_Central"/>
</dbReference>
<dbReference type="GO" id="GO:0015137">
    <property type="term" value="F:citrate transmembrane transporter activity"/>
    <property type="evidence" value="ECO:0000318"/>
    <property type="project" value="GO_Central"/>
</dbReference>
<dbReference type="GO" id="GO:0015361">
    <property type="term" value="F:low-affinity sodium:dicarboxylate symporter activity"/>
    <property type="evidence" value="ECO:0000314"/>
    <property type="project" value="WormBase"/>
</dbReference>
<dbReference type="GO" id="GO:0015141">
    <property type="term" value="F:succinate transmembrane transporter activity"/>
    <property type="evidence" value="ECO:0000314"/>
    <property type="project" value="WormBase"/>
</dbReference>
<dbReference type="GO" id="GO:0015746">
    <property type="term" value="P:citrate transport"/>
    <property type="evidence" value="ECO:0000318"/>
    <property type="project" value="GO_Central"/>
</dbReference>
<dbReference type="GO" id="GO:0015744">
    <property type="term" value="P:succinate transport"/>
    <property type="evidence" value="ECO:0000314"/>
    <property type="project" value="WormBase"/>
</dbReference>
<dbReference type="GO" id="GO:0055085">
    <property type="term" value="P:transmembrane transport"/>
    <property type="evidence" value="ECO:0000318"/>
    <property type="project" value="GO_Central"/>
</dbReference>
<dbReference type="CDD" id="cd01115">
    <property type="entry name" value="SLC13_permease"/>
    <property type="match status" value="1"/>
</dbReference>
<dbReference type="InterPro" id="IPR031312">
    <property type="entry name" value="Na/sul_symport_CS"/>
</dbReference>
<dbReference type="InterPro" id="IPR001898">
    <property type="entry name" value="SLC13A/DASS"/>
</dbReference>
<dbReference type="PANTHER" id="PTHR10283">
    <property type="entry name" value="SOLUTE CARRIER FAMILY 13 MEMBER"/>
    <property type="match status" value="1"/>
</dbReference>
<dbReference type="PANTHER" id="PTHR10283:SF82">
    <property type="entry name" value="SOLUTE CARRIER FAMILY 13 MEMBER 2"/>
    <property type="match status" value="1"/>
</dbReference>
<dbReference type="Pfam" id="PF00939">
    <property type="entry name" value="Na_sulph_symp"/>
    <property type="match status" value="1"/>
</dbReference>
<dbReference type="PROSITE" id="PS01271">
    <property type="entry name" value="NA_SULFATE"/>
    <property type="match status" value="1"/>
</dbReference>
<comment type="function">
    <text evidence="2">Low affinity sodium-dicarboxylate cotransporter that accepts a range of tricarboxylic acid-cycle intermediates with 4-5 carbon atoms. There is no interaction with monocarboxylates.</text>
</comment>
<comment type="subcellular location">
    <subcellularLocation>
        <location evidence="3">Membrane</location>
        <topology evidence="3">Multi-pass membrane protein</topology>
    </subcellularLocation>
</comment>
<comment type="tissue specificity">
    <text evidence="2">Nad-1 and nad-2 are coexpressed in the intestinal tract from early larvae to adults, expression is from the pharynx through to the anus. Expression level is significantly greater in the anterior half of the intestine than in the posterior half.</text>
</comment>
<comment type="developmental stage">
    <text evidence="2">Not detected in the embryo. Expressed from early larvae at a high level, levels decrease in later larvae and then increase again at adult stages.</text>
</comment>
<comment type="similarity">
    <text evidence="3">Belongs to the SLC13A/DASS transporter (TC 2.A.47) family. NADC subfamily.</text>
</comment>
<keyword id="KW-0406">Ion transport</keyword>
<keyword id="KW-0472">Membrane</keyword>
<keyword id="KW-1185">Reference proteome</keyword>
<keyword id="KW-0915">Sodium</keyword>
<keyword id="KW-0739">Sodium transport</keyword>
<keyword id="KW-0769">Symport</keyword>
<keyword id="KW-0812">Transmembrane</keyword>
<keyword id="KW-1133">Transmembrane helix</keyword>
<keyword id="KW-0813">Transport</keyword>
<evidence type="ECO:0000255" key="1"/>
<evidence type="ECO:0000269" key="2">
    <source>
    </source>
</evidence>
<evidence type="ECO:0000305" key="3"/>
<protein>
    <recommendedName>
        <fullName>Sodium-dependent low-affinity dicarboxylate transporter 1</fullName>
    </recommendedName>
    <alternativeName>
        <fullName>Na(+)/dicarboxylate cotransporter 1</fullName>
        <shortName>NaDC-1</shortName>
        <shortName>ceNaDC1</shortName>
    </alternativeName>
</protein>
<feature type="chain" id="PRO_0000172496" description="Sodium-dependent low-affinity dicarboxylate transporter 1">
    <location>
        <begin position="1"/>
        <end position="582"/>
    </location>
</feature>
<feature type="transmembrane region" description="Helical" evidence="1">
    <location>
        <begin position="17"/>
        <end position="37"/>
    </location>
</feature>
<feature type="transmembrane region" description="Helical" evidence="1">
    <location>
        <begin position="59"/>
        <end position="79"/>
    </location>
</feature>
<feature type="transmembrane region" description="Helical" evidence="1">
    <location>
        <begin position="87"/>
        <end position="107"/>
    </location>
</feature>
<feature type="transmembrane region" description="Helical" evidence="1">
    <location>
        <begin position="130"/>
        <end position="150"/>
    </location>
</feature>
<feature type="transmembrane region" description="Helical" evidence="1">
    <location>
        <begin position="224"/>
        <end position="244"/>
    </location>
</feature>
<feature type="transmembrane region" description="Helical" evidence="1">
    <location>
        <begin position="271"/>
        <end position="291"/>
    </location>
</feature>
<feature type="transmembrane region" description="Helical" evidence="1">
    <location>
        <begin position="317"/>
        <end position="337"/>
    </location>
</feature>
<feature type="transmembrane region" description="Helical" evidence="1">
    <location>
        <begin position="353"/>
        <end position="373"/>
    </location>
</feature>
<feature type="transmembrane region" description="Helical" evidence="1">
    <location>
        <begin position="401"/>
        <end position="421"/>
    </location>
</feature>
<feature type="transmembrane region" description="Helical" evidence="1">
    <location>
        <begin position="455"/>
        <end position="475"/>
    </location>
</feature>
<feature type="transmembrane region" description="Helical" evidence="1">
    <location>
        <begin position="482"/>
        <end position="502"/>
    </location>
</feature>
<feature type="transmembrane region" description="Helical" evidence="1">
    <location>
        <begin position="527"/>
        <end position="547"/>
    </location>
</feature>
<reference key="1">
    <citation type="journal article" date="2003" name="J. Biol. Chem.">
        <title>Structural and functional characteristics of two sodium-coupled dicarboxylate transporters (ceNaDC1 and ceNaDC2) from Caenorhabditis elegans and their relevance to life span.</title>
        <authorList>
            <person name="Fei Y.-J."/>
            <person name="Inoue K."/>
            <person name="Ganapathy V."/>
        </authorList>
    </citation>
    <scope>NUCLEOTIDE SEQUENCE [MRNA]</scope>
    <scope>FUNCTION</scope>
    <scope>TISSUE SPECIFICITY</scope>
    <scope>DEVELOPMENTAL STAGE</scope>
    <source>
        <strain>Bristol N2</strain>
    </source>
</reference>
<reference key="2">
    <citation type="journal article" date="1998" name="Science">
        <title>Genome sequence of the nematode C. elegans: a platform for investigating biology.</title>
        <authorList>
            <consortium name="The C. elegans sequencing consortium"/>
        </authorList>
    </citation>
    <scope>NUCLEOTIDE SEQUENCE [LARGE SCALE GENOMIC DNA]</scope>
    <source>
        <strain>Bristol N2</strain>
    </source>
</reference>
<organism>
    <name type="scientific">Caenorhabditis elegans</name>
    <dbReference type="NCBI Taxonomy" id="6239"/>
    <lineage>
        <taxon>Eukaryota</taxon>
        <taxon>Metazoa</taxon>
        <taxon>Ecdysozoa</taxon>
        <taxon>Nematoda</taxon>
        <taxon>Chromadorea</taxon>
        <taxon>Rhabditida</taxon>
        <taxon>Rhabditina</taxon>
        <taxon>Rhabditomorpha</taxon>
        <taxon>Rhabditoidea</taxon>
        <taxon>Rhabditidae</taxon>
        <taxon>Peloderinae</taxon>
        <taxon>Caenorhabditis</taxon>
    </lineage>
</organism>
<proteinExistence type="evidence at transcript level"/>